<protein>
    <recommendedName>
        <fullName evidence="1">Large ribosomal subunit protein uL22</fullName>
    </recommendedName>
    <alternativeName>
        <fullName evidence="3">50S ribosomal protein L22</fullName>
    </alternativeName>
</protein>
<accession>A1UBP1</accession>
<proteinExistence type="inferred from homology"/>
<gene>
    <name evidence="1" type="primary">rplV</name>
    <name type="ordered locus">Mkms_1035</name>
</gene>
<name>RL22_MYCSK</name>
<comment type="function">
    <text evidence="1">This protein binds specifically to 23S rRNA; its binding is stimulated by other ribosomal proteins, e.g. L4, L17, and L20. It is important during the early stages of 50S assembly. It makes multiple contacts with different domains of the 23S rRNA in the assembled 50S subunit and ribosome (By similarity).</text>
</comment>
<comment type="function">
    <text evidence="1">The globular domain of the protein is located near the polypeptide exit tunnel on the outside of the subunit, while an extended beta-hairpin is found that lines the wall of the exit tunnel in the center of the 70S ribosome.</text>
</comment>
<comment type="subunit">
    <text evidence="1">Part of the 50S ribosomal subunit.</text>
</comment>
<comment type="similarity">
    <text evidence="1">Belongs to the universal ribosomal protein uL22 family.</text>
</comment>
<feature type="chain" id="PRO_0000354490" description="Large ribosomal subunit protein uL22">
    <location>
        <begin position="1"/>
        <end position="177"/>
    </location>
</feature>
<feature type="region of interest" description="Disordered" evidence="2">
    <location>
        <begin position="118"/>
        <end position="177"/>
    </location>
</feature>
<feature type="compositionally biased region" description="Basic and acidic residues" evidence="2">
    <location>
        <begin position="121"/>
        <end position="130"/>
    </location>
</feature>
<feature type="compositionally biased region" description="Low complexity" evidence="2">
    <location>
        <begin position="145"/>
        <end position="167"/>
    </location>
</feature>
<dbReference type="EMBL" id="CP000518">
    <property type="protein sequence ID" value="ABL90249.1"/>
    <property type="molecule type" value="Genomic_DNA"/>
</dbReference>
<dbReference type="SMR" id="A1UBP1"/>
<dbReference type="STRING" id="189918.Mkms_1035"/>
<dbReference type="KEGG" id="mkm:Mkms_1035"/>
<dbReference type="HOGENOM" id="CLU_083987_3_2_11"/>
<dbReference type="OrthoDB" id="9805969at2"/>
<dbReference type="GO" id="GO:0022625">
    <property type="term" value="C:cytosolic large ribosomal subunit"/>
    <property type="evidence" value="ECO:0007669"/>
    <property type="project" value="TreeGrafter"/>
</dbReference>
<dbReference type="GO" id="GO:0019843">
    <property type="term" value="F:rRNA binding"/>
    <property type="evidence" value="ECO:0007669"/>
    <property type="project" value="UniProtKB-UniRule"/>
</dbReference>
<dbReference type="GO" id="GO:0003735">
    <property type="term" value="F:structural constituent of ribosome"/>
    <property type="evidence" value="ECO:0007669"/>
    <property type="project" value="InterPro"/>
</dbReference>
<dbReference type="GO" id="GO:0006412">
    <property type="term" value="P:translation"/>
    <property type="evidence" value="ECO:0007669"/>
    <property type="project" value="UniProtKB-UniRule"/>
</dbReference>
<dbReference type="CDD" id="cd00336">
    <property type="entry name" value="Ribosomal_L22"/>
    <property type="match status" value="1"/>
</dbReference>
<dbReference type="FunFam" id="3.90.470.10:FF:000002">
    <property type="entry name" value="50S ribosomal protein L22"/>
    <property type="match status" value="1"/>
</dbReference>
<dbReference type="Gene3D" id="3.90.470.10">
    <property type="entry name" value="Ribosomal protein L22/L17"/>
    <property type="match status" value="1"/>
</dbReference>
<dbReference type="HAMAP" id="MF_01331_B">
    <property type="entry name" value="Ribosomal_uL22_B"/>
    <property type="match status" value="1"/>
</dbReference>
<dbReference type="InterPro" id="IPR001063">
    <property type="entry name" value="Ribosomal_uL22"/>
</dbReference>
<dbReference type="InterPro" id="IPR005727">
    <property type="entry name" value="Ribosomal_uL22_bac/chlpt-type"/>
</dbReference>
<dbReference type="InterPro" id="IPR047867">
    <property type="entry name" value="Ribosomal_uL22_bac/org-type"/>
</dbReference>
<dbReference type="InterPro" id="IPR018260">
    <property type="entry name" value="Ribosomal_uL22_CS"/>
</dbReference>
<dbReference type="InterPro" id="IPR036394">
    <property type="entry name" value="Ribosomal_uL22_sf"/>
</dbReference>
<dbReference type="NCBIfam" id="TIGR01044">
    <property type="entry name" value="rplV_bact"/>
    <property type="match status" value="1"/>
</dbReference>
<dbReference type="PANTHER" id="PTHR13501">
    <property type="entry name" value="CHLOROPLAST 50S RIBOSOMAL PROTEIN L22-RELATED"/>
    <property type="match status" value="1"/>
</dbReference>
<dbReference type="PANTHER" id="PTHR13501:SF8">
    <property type="entry name" value="LARGE RIBOSOMAL SUBUNIT PROTEIN UL22M"/>
    <property type="match status" value="1"/>
</dbReference>
<dbReference type="Pfam" id="PF00237">
    <property type="entry name" value="Ribosomal_L22"/>
    <property type="match status" value="1"/>
</dbReference>
<dbReference type="SUPFAM" id="SSF54843">
    <property type="entry name" value="Ribosomal protein L22"/>
    <property type="match status" value="1"/>
</dbReference>
<dbReference type="PROSITE" id="PS00464">
    <property type="entry name" value="RIBOSOMAL_L22"/>
    <property type="match status" value="1"/>
</dbReference>
<keyword id="KW-0687">Ribonucleoprotein</keyword>
<keyword id="KW-0689">Ribosomal protein</keyword>
<keyword id="KW-0694">RNA-binding</keyword>
<keyword id="KW-0699">rRNA-binding</keyword>
<evidence type="ECO:0000255" key="1">
    <source>
        <dbReference type="HAMAP-Rule" id="MF_01331"/>
    </source>
</evidence>
<evidence type="ECO:0000256" key="2">
    <source>
        <dbReference type="SAM" id="MobiDB-lite"/>
    </source>
</evidence>
<evidence type="ECO:0000305" key="3"/>
<organism>
    <name type="scientific">Mycobacterium sp. (strain KMS)</name>
    <dbReference type="NCBI Taxonomy" id="189918"/>
    <lineage>
        <taxon>Bacteria</taxon>
        <taxon>Bacillati</taxon>
        <taxon>Actinomycetota</taxon>
        <taxon>Actinomycetes</taxon>
        <taxon>Mycobacteriales</taxon>
        <taxon>Mycobacteriaceae</taxon>
        <taxon>Mycobacterium</taxon>
    </lineage>
</organism>
<reference key="1">
    <citation type="submission" date="2006-12" db="EMBL/GenBank/DDBJ databases">
        <title>Complete sequence of chromosome of Mycobacterium sp. KMS.</title>
        <authorList>
            <consortium name="US DOE Joint Genome Institute"/>
            <person name="Copeland A."/>
            <person name="Lucas S."/>
            <person name="Lapidus A."/>
            <person name="Barry K."/>
            <person name="Detter J.C."/>
            <person name="Glavina del Rio T."/>
            <person name="Hammon N."/>
            <person name="Israni S."/>
            <person name="Dalin E."/>
            <person name="Tice H."/>
            <person name="Pitluck S."/>
            <person name="Kiss H."/>
            <person name="Brettin T."/>
            <person name="Bruce D."/>
            <person name="Han C."/>
            <person name="Tapia R."/>
            <person name="Gilna P."/>
            <person name="Schmutz J."/>
            <person name="Larimer F."/>
            <person name="Land M."/>
            <person name="Hauser L."/>
            <person name="Kyrpides N."/>
            <person name="Mikhailova N."/>
            <person name="Miller C.D."/>
            <person name="Richardson P."/>
        </authorList>
    </citation>
    <scope>NUCLEOTIDE SEQUENCE [LARGE SCALE GENOMIC DNA]</scope>
    <source>
        <strain>KMS</strain>
    </source>
</reference>
<sequence>MTTATTNPSTYPNAMAVARYVGISASKARRVIDLVRGKSVEEALDILRWAPQQASEPVAKVIASAAANAQNNEGLDPSTLVVATIHADEGPTAKRIRPRAQGRAFRIRKRTSHITVIVESRPSREGRRGGAGESAGGARARRAQGSKAAAAKKAPASSSKKAATTTEASEEAKGGSQ</sequence>